<proteinExistence type="evidence at protein level"/>
<dbReference type="EMBL" id="GU293002">
    <property type="protein sequence ID" value="ADB56818.1"/>
    <property type="molecule type" value="mRNA"/>
</dbReference>
<dbReference type="ArachnoServer" id="AS001987">
    <property type="toxin name" value="U12-theraphotoxin-Hhn1a"/>
</dbReference>
<dbReference type="GO" id="GO:0005576">
    <property type="term" value="C:extracellular region"/>
    <property type="evidence" value="ECO:0007669"/>
    <property type="project" value="UniProtKB-SubCell"/>
</dbReference>
<dbReference type="GO" id="GO:0099106">
    <property type="term" value="F:ion channel regulator activity"/>
    <property type="evidence" value="ECO:0007669"/>
    <property type="project" value="UniProtKB-KW"/>
</dbReference>
<dbReference type="GO" id="GO:0090729">
    <property type="term" value="F:toxin activity"/>
    <property type="evidence" value="ECO:0007669"/>
    <property type="project" value="UniProtKB-KW"/>
</dbReference>
<sequence length="98" mass="11105">MTTVGVSLFRRSPEKITMKIATFLGLSFLLIASYVLICEAQHPGFQELLILEENMRDPENSKERSCAKPRENCNRMNILCCRGECVCPTFGDCFCYGD</sequence>
<comment type="function">
    <text>Putative ion channel inhibitor.</text>
</comment>
<comment type="subcellular location">
    <subcellularLocation>
        <location>Secreted</location>
    </subcellularLocation>
</comment>
<comment type="tissue specificity">
    <text>Expressed by the venom gland.</text>
</comment>
<comment type="domain">
    <text evidence="1">The presence of a 'disulfide through disulfide knot' structurally defines this protein as a knottin.</text>
</comment>
<comment type="similarity">
    <text>Belongs to the hainantoxin family. 17 subfamily.</text>
</comment>
<organism>
    <name type="scientific">Cyriopagopus hainanus</name>
    <name type="common">Chinese bird spider</name>
    <name type="synonym">Haplopelma hainanum</name>
    <dbReference type="NCBI Taxonomy" id="209901"/>
    <lineage>
        <taxon>Eukaryota</taxon>
        <taxon>Metazoa</taxon>
        <taxon>Ecdysozoa</taxon>
        <taxon>Arthropoda</taxon>
        <taxon>Chelicerata</taxon>
        <taxon>Arachnida</taxon>
        <taxon>Araneae</taxon>
        <taxon>Mygalomorphae</taxon>
        <taxon>Theraphosidae</taxon>
        <taxon>Haplopelma</taxon>
    </lineage>
</organism>
<accession>D2Y2C5</accession>
<name>H17A1_CYRHA</name>
<reference key="1">
    <citation type="journal article" date="2010" name="J. Proteome Res.">
        <title>Molecular diversification of peptide toxins from the tarantula Haplopelma hainanum (Ornithoctonus hainana) venom based on transcriptomic, peptidomic, and genomic analyses.</title>
        <authorList>
            <person name="Tang X."/>
            <person name="Zhang Y."/>
            <person name="Hu W."/>
            <person name="Xu D."/>
            <person name="Tao H."/>
            <person name="Yang X."/>
            <person name="Li Y."/>
            <person name="Jiang L."/>
            <person name="Liang S."/>
        </authorList>
    </citation>
    <scope>NUCLEOTIDE SEQUENCE [LARGE SCALE MRNA]</scope>
    <scope>PROTEIN SEQUENCE OF 65-98</scope>
    <scope>IDENTIFICATION BY MASS SPECTROMETRY</scope>
    <source>
        <tissue>Venom</tissue>
        <tissue>Venom gland</tissue>
    </source>
</reference>
<protein>
    <recommendedName>
        <fullName>Hainantoxin-XVII</fullName>
        <shortName>HNTX-XVII</shortName>
    </recommendedName>
    <alternativeName>
        <fullName>Peptide F2-20.97</fullName>
    </alternativeName>
</protein>
<feature type="signal peptide" evidence="2">
    <location>
        <begin position="1"/>
        <end position="40"/>
    </location>
</feature>
<feature type="propeptide" id="PRO_0000401027" evidence="3">
    <location>
        <begin position="41"/>
        <end position="64"/>
    </location>
</feature>
<feature type="peptide" id="PRO_0000401028" description="Hainantoxin-XVII">
    <location>
        <begin position="65"/>
        <end position="98"/>
    </location>
</feature>
<feature type="disulfide bond" evidence="1">
    <location>
        <begin position="66"/>
        <end position="81"/>
    </location>
</feature>
<feature type="disulfide bond" evidence="1">
    <location>
        <begin position="73"/>
        <end position="85"/>
    </location>
</feature>
<feature type="disulfide bond" evidence="1">
    <location>
        <begin position="80"/>
        <end position="95"/>
    </location>
</feature>
<evidence type="ECO:0000250" key="1"/>
<evidence type="ECO:0000255" key="2"/>
<evidence type="ECO:0000269" key="3">
    <source>
    </source>
</evidence>
<keyword id="KW-0903">Direct protein sequencing</keyword>
<keyword id="KW-1015">Disulfide bond</keyword>
<keyword id="KW-0872">Ion channel impairing toxin</keyword>
<keyword id="KW-0960">Knottin</keyword>
<keyword id="KW-0964">Secreted</keyword>
<keyword id="KW-0732">Signal</keyword>
<keyword id="KW-0800">Toxin</keyword>